<keyword id="KW-0328">Glycosyltransferase</keyword>
<keyword id="KW-0460">Magnesium</keyword>
<keyword id="KW-0665">Pyrimidine biosynthesis</keyword>
<keyword id="KW-1185">Reference proteome</keyword>
<keyword id="KW-0808">Transferase</keyword>
<comment type="function">
    <text evidence="1">Catalyzes the transfer of a ribosyl phosphate group from 5-phosphoribose 1-diphosphate to orotate, leading to the formation of orotidine monophosphate (OMP).</text>
</comment>
<comment type="catalytic activity">
    <reaction evidence="1">
        <text>orotidine 5'-phosphate + diphosphate = orotate + 5-phospho-alpha-D-ribose 1-diphosphate</text>
        <dbReference type="Rhea" id="RHEA:10380"/>
        <dbReference type="ChEBI" id="CHEBI:30839"/>
        <dbReference type="ChEBI" id="CHEBI:33019"/>
        <dbReference type="ChEBI" id="CHEBI:57538"/>
        <dbReference type="ChEBI" id="CHEBI:58017"/>
        <dbReference type="EC" id="2.4.2.10"/>
    </reaction>
</comment>
<comment type="cofactor">
    <cofactor evidence="1">
        <name>Mg(2+)</name>
        <dbReference type="ChEBI" id="CHEBI:18420"/>
    </cofactor>
</comment>
<comment type="pathway">
    <text evidence="1">Pyrimidine metabolism; UMP biosynthesis via de novo pathway; UMP from orotate: step 1/2.</text>
</comment>
<comment type="subunit">
    <text evidence="1">Homodimer.</text>
</comment>
<comment type="similarity">
    <text evidence="1">Belongs to the purine/pyrimidine phosphoribosyltransferase family. PyrE subfamily.</text>
</comment>
<organism>
    <name type="scientific">Actinobacillus succinogenes (strain ATCC 55618 / DSM 22257 / CCUG 43843 / 130Z)</name>
    <dbReference type="NCBI Taxonomy" id="339671"/>
    <lineage>
        <taxon>Bacteria</taxon>
        <taxon>Pseudomonadati</taxon>
        <taxon>Pseudomonadota</taxon>
        <taxon>Gammaproteobacteria</taxon>
        <taxon>Pasteurellales</taxon>
        <taxon>Pasteurellaceae</taxon>
        <taxon>Actinobacillus</taxon>
    </lineage>
</organism>
<feature type="chain" id="PRO_1000073104" description="Orotate phosphoribosyltransferase">
    <location>
        <begin position="1"/>
        <end position="214"/>
    </location>
</feature>
<feature type="binding site" description="in other chain" evidence="1">
    <location>
        <position position="26"/>
    </location>
    <ligand>
        <name>5-phospho-alpha-D-ribose 1-diphosphate</name>
        <dbReference type="ChEBI" id="CHEBI:58017"/>
        <note>ligand shared between dimeric partners</note>
    </ligand>
</feature>
<feature type="binding site" evidence="1">
    <location>
        <begin position="34"/>
        <end position="35"/>
    </location>
    <ligand>
        <name>orotate</name>
        <dbReference type="ChEBI" id="CHEBI:30839"/>
    </ligand>
</feature>
<feature type="binding site" description="in other chain" evidence="1">
    <location>
        <begin position="72"/>
        <end position="73"/>
    </location>
    <ligand>
        <name>5-phospho-alpha-D-ribose 1-diphosphate</name>
        <dbReference type="ChEBI" id="CHEBI:58017"/>
        <note>ligand shared between dimeric partners</note>
    </ligand>
</feature>
<feature type="binding site" evidence="1">
    <location>
        <position position="99"/>
    </location>
    <ligand>
        <name>5-phospho-alpha-D-ribose 1-diphosphate</name>
        <dbReference type="ChEBI" id="CHEBI:58017"/>
        <note>ligand shared between dimeric partners</note>
    </ligand>
</feature>
<feature type="binding site" description="in other chain" evidence="1">
    <location>
        <position position="100"/>
    </location>
    <ligand>
        <name>5-phospho-alpha-D-ribose 1-diphosphate</name>
        <dbReference type="ChEBI" id="CHEBI:58017"/>
        <note>ligand shared between dimeric partners</note>
    </ligand>
</feature>
<feature type="binding site" evidence="1">
    <location>
        <position position="103"/>
    </location>
    <ligand>
        <name>5-phospho-alpha-D-ribose 1-diphosphate</name>
        <dbReference type="ChEBI" id="CHEBI:58017"/>
        <note>ligand shared between dimeric partners</note>
    </ligand>
</feature>
<feature type="binding site" evidence="1">
    <location>
        <position position="105"/>
    </location>
    <ligand>
        <name>5-phospho-alpha-D-ribose 1-diphosphate</name>
        <dbReference type="ChEBI" id="CHEBI:58017"/>
        <note>ligand shared between dimeric partners</note>
    </ligand>
</feature>
<feature type="binding site" description="in other chain" evidence="1">
    <location>
        <begin position="124"/>
        <end position="132"/>
    </location>
    <ligand>
        <name>5-phospho-alpha-D-ribose 1-diphosphate</name>
        <dbReference type="ChEBI" id="CHEBI:58017"/>
        <note>ligand shared between dimeric partners</note>
    </ligand>
</feature>
<feature type="binding site" evidence="1">
    <location>
        <position position="128"/>
    </location>
    <ligand>
        <name>orotate</name>
        <dbReference type="ChEBI" id="CHEBI:30839"/>
    </ligand>
</feature>
<feature type="binding site" evidence="1">
    <location>
        <position position="156"/>
    </location>
    <ligand>
        <name>orotate</name>
        <dbReference type="ChEBI" id="CHEBI:30839"/>
    </ligand>
</feature>
<evidence type="ECO:0000255" key="1">
    <source>
        <dbReference type="HAMAP-Rule" id="MF_01208"/>
    </source>
</evidence>
<proteinExistence type="inferred from homology"/>
<reference key="1">
    <citation type="journal article" date="2010" name="BMC Genomics">
        <title>A genomic perspective on the potential of Actinobacillus succinogenes for industrial succinate production.</title>
        <authorList>
            <person name="McKinlay J.B."/>
            <person name="Laivenieks M."/>
            <person name="Schindler B.D."/>
            <person name="McKinlay A.A."/>
            <person name="Siddaramappa S."/>
            <person name="Challacombe J.F."/>
            <person name="Lowry S.R."/>
            <person name="Clum A."/>
            <person name="Lapidus A.L."/>
            <person name="Burkhart K.B."/>
            <person name="Harkins V."/>
            <person name="Vieille C."/>
        </authorList>
    </citation>
    <scope>NUCLEOTIDE SEQUENCE [LARGE SCALE GENOMIC DNA]</scope>
    <source>
        <strain>ATCC 55618 / DSM 22257 / CCUG 43843 / 130Z</strain>
    </source>
</reference>
<accession>A6VLF2</accession>
<name>PYRE_ACTSZ</name>
<sequence length="214" mass="23578">MQDYKIEFIKFALSRNVLRFGEFKLKSGRVSPYFFNAGLFNTGADLARLGEFYAAAIQANRLAYDVIFGPAYKGIPIGTTVSVALFNRFGLDKPVCFNRKEAKDHGEGGNLIGSPLQGNVLLVDDVITAGTAIREAMDIIAANGATLSAVVIALNRKERGKGELSAVQEVERDYQCRVLSIIELDDLLAFLETDSEYSRYLPSMKAYREQFGVA</sequence>
<gene>
    <name evidence="1" type="primary">pyrE</name>
    <name type="ordered locus">Asuc_0421</name>
</gene>
<protein>
    <recommendedName>
        <fullName evidence="1">Orotate phosphoribosyltransferase</fullName>
        <shortName evidence="1">OPRT</shortName>
        <shortName evidence="1">OPRTase</shortName>
        <ecNumber evidence="1">2.4.2.10</ecNumber>
    </recommendedName>
</protein>
<dbReference type="EC" id="2.4.2.10" evidence="1"/>
<dbReference type="EMBL" id="CP000746">
    <property type="protein sequence ID" value="ABR73799.1"/>
    <property type="molecule type" value="Genomic_DNA"/>
</dbReference>
<dbReference type="RefSeq" id="WP_012072184.1">
    <property type="nucleotide sequence ID" value="NC_009655.1"/>
</dbReference>
<dbReference type="SMR" id="A6VLF2"/>
<dbReference type="STRING" id="339671.Asuc_0421"/>
<dbReference type="KEGG" id="asu:Asuc_0421"/>
<dbReference type="eggNOG" id="COG0461">
    <property type="taxonomic scope" value="Bacteria"/>
</dbReference>
<dbReference type="HOGENOM" id="CLU_074878_0_1_6"/>
<dbReference type="OrthoDB" id="9779060at2"/>
<dbReference type="UniPathway" id="UPA00070">
    <property type="reaction ID" value="UER00119"/>
</dbReference>
<dbReference type="Proteomes" id="UP000001114">
    <property type="component" value="Chromosome"/>
</dbReference>
<dbReference type="GO" id="GO:0005737">
    <property type="term" value="C:cytoplasm"/>
    <property type="evidence" value="ECO:0007669"/>
    <property type="project" value="TreeGrafter"/>
</dbReference>
<dbReference type="GO" id="GO:0000287">
    <property type="term" value="F:magnesium ion binding"/>
    <property type="evidence" value="ECO:0007669"/>
    <property type="project" value="UniProtKB-UniRule"/>
</dbReference>
<dbReference type="GO" id="GO:0004588">
    <property type="term" value="F:orotate phosphoribosyltransferase activity"/>
    <property type="evidence" value="ECO:0007669"/>
    <property type="project" value="UniProtKB-UniRule"/>
</dbReference>
<dbReference type="GO" id="GO:0006207">
    <property type="term" value="P:'de novo' pyrimidine nucleobase biosynthetic process"/>
    <property type="evidence" value="ECO:0007669"/>
    <property type="project" value="TreeGrafter"/>
</dbReference>
<dbReference type="GO" id="GO:0044205">
    <property type="term" value="P:'de novo' UMP biosynthetic process"/>
    <property type="evidence" value="ECO:0007669"/>
    <property type="project" value="UniProtKB-UniRule"/>
</dbReference>
<dbReference type="GO" id="GO:0046132">
    <property type="term" value="P:pyrimidine ribonucleoside biosynthetic process"/>
    <property type="evidence" value="ECO:0007669"/>
    <property type="project" value="TreeGrafter"/>
</dbReference>
<dbReference type="CDD" id="cd06223">
    <property type="entry name" value="PRTases_typeI"/>
    <property type="match status" value="1"/>
</dbReference>
<dbReference type="FunFam" id="3.40.50.2020:FF:000008">
    <property type="entry name" value="Orotate phosphoribosyltransferase"/>
    <property type="match status" value="1"/>
</dbReference>
<dbReference type="Gene3D" id="3.40.50.2020">
    <property type="match status" value="1"/>
</dbReference>
<dbReference type="HAMAP" id="MF_01208">
    <property type="entry name" value="PyrE"/>
    <property type="match status" value="1"/>
</dbReference>
<dbReference type="InterPro" id="IPR023031">
    <property type="entry name" value="OPRT"/>
</dbReference>
<dbReference type="InterPro" id="IPR004467">
    <property type="entry name" value="Or_phspho_trans_dom"/>
</dbReference>
<dbReference type="InterPro" id="IPR000836">
    <property type="entry name" value="PRibTrfase_dom"/>
</dbReference>
<dbReference type="InterPro" id="IPR029057">
    <property type="entry name" value="PRTase-like"/>
</dbReference>
<dbReference type="NCBIfam" id="TIGR00336">
    <property type="entry name" value="pyrE"/>
    <property type="match status" value="1"/>
</dbReference>
<dbReference type="PANTHER" id="PTHR46683">
    <property type="entry name" value="OROTATE PHOSPHORIBOSYLTRANSFERASE 1-RELATED"/>
    <property type="match status" value="1"/>
</dbReference>
<dbReference type="PANTHER" id="PTHR46683:SF1">
    <property type="entry name" value="OROTATE PHOSPHORIBOSYLTRANSFERASE 1-RELATED"/>
    <property type="match status" value="1"/>
</dbReference>
<dbReference type="Pfam" id="PF00156">
    <property type="entry name" value="Pribosyltran"/>
    <property type="match status" value="1"/>
</dbReference>
<dbReference type="SUPFAM" id="SSF53271">
    <property type="entry name" value="PRTase-like"/>
    <property type="match status" value="1"/>
</dbReference>
<dbReference type="PROSITE" id="PS00103">
    <property type="entry name" value="PUR_PYR_PR_TRANSFER"/>
    <property type="match status" value="1"/>
</dbReference>